<dbReference type="PDB" id="5L83">
    <property type="method" value="X-ray"/>
    <property type="resolution" value="1.90 A"/>
    <property type="chains" value="A/B=5-114"/>
</dbReference>
<dbReference type="PDBsum" id="5L83"/>
<dbReference type="SMR" id="M1C146"/>
<dbReference type="FunCoup" id="M1C146">
    <property type="interactions" value="2082"/>
</dbReference>
<dbReference type="STRING" id="4113.M1C146"/>
<dbReference type="PaxDb" id="4113-PGSC0003DMT400037386"/>
<dbReference type="EnsemblPlants" id="PGSC0003DMT400037386">
    <property type="protein sequence ID" value="PGSC0003DMT400037386"/>
    <property type="gene ID" value="PGSC0003DMG400014422"/>
</dbReference>
<dbReference type="EnsemblPlants" id="PGSC0003DMT400057469">
    <property type="protein sequence ID" value="PGSC0003DMT400057469"/>
    <property type="gene ID" value="PGSC0003DMG402022314"/>
</dbReference>
<dbReference type="EnsemblPlants" id="RHC10H1G0274.2.1">
    <property type="protein sequence ID" value="RHC10H1G0274.2.1"/>
    <property type="gene ID" value="RHC10H1G0274.2"/>
</dbReference>
<dbReference type="GeneID" id="102578628"/>
<dbReference type="Gramene" id="PGSC0003DMT400037386">
    <property type="protein sequence ID" value="PGSC0003DMT400037386"/>
    <property type="gene ID" value="PGSC0003DMG400014422"/>
</dbReference>
<dbReference type="Gramene" id="PGSC0003DMT400057469">
    <property type="protein sequence ID" value="PGSC0003DMT400057469"/>
    <property type="gene ID" value="PGSC0003DMG402022314"/>
</dbReference>
<dbReference type="Gramene" id="RHC10H1G0274.2.1">
    <property type="protein sequence ID" value="RHC10H1G0274.2.1"/>
    <property type="gene ID" value="RHC10H1G0274.2"/>
</dbReference>
<dbReference type="KEGG" id="sot:102578628"/>
<dbReference type="KEGG" id="sot:102593150"/>
<dbReference type="eggNOG" id="KOG1654">
    <property type="taxonomic scope" value="Eukaryota"/>
</dbReference>
<dbReference type="HOGENOM" id="CLU_119276_0_1_1"/>
<dbReference type="InParanoid" id="M1C146"/>
<dbReference type="OMA" id="AKMKWMF"/>
<dbReference type="OrthoDB" id="1158011at2759"/>
<dbReference type="Proteomes" id="UP000011115">
    <property type="component" value="Unassembled WGS sequence"/>
</dbReference>
<dbReference type="GO" id="GO:0000421">
    <property type="term" value="C:autophagosome membrane"/>
    <property type="evidence" value="ECO:0000314"/>
    <property type="project" value="UniProtKB"/>
</dbReference>
<dbReference type="GO" id="GO:0031410">
    <property type="term" value="C:cytoplasmic vesicle"/>
    <property type="evidence" value="ECO:0007669"/>
    <property type="project" value="UniProtKB-KW"/>
</dbReference>
<dbReference type="GO" id="GO:0005856">
    <property type="term" value="C:cytoskeleton"/>
    <property type="evidence" value="ECO:0000314"/>
    <property type="project" value="UniProtKB"/>
</dbReference>
<dbReference type="GO" id="GO:0009705">
    <property type="term" value="C:plant-type vacuole membrane"/>
    <property type="evidence" value="ECO:0000314"/>
    <property type="project" value="UniProtKB"/>
</dbReference>
<dbReference type="GO" id="GO:0008429">
    <property type="term" value="F:phosphatidylethanolamine binding"/>
    <property type="evidence" value="ECO:0000318"/>
    <property type="project" value="GO_Central"/>
</dbReference>
<dbReference type="GO" id="GO:0000045">
    <property type="term" value="P:autophagosome assembly"/>
    <property type="evidence" value="ECO:0000314"/>
    <property type="project" value="UniProtKB"/>
</dbReference>
<dbReference type="GO" id="GO:0097352">
    <property type="term" value="P:autophagosome maturation"/>
    <property type="evidence" value="ECO:0000318"/>
    <property type="project" value="GO_Central"/>
</dbReference>
<dbReference type="GO" id="GO:0006995">
    <property type="term" value="P:cellular response to nitrogen starvation"/>
    <property type="evidence" value="ECO:0000318"/>
    <property type="project" value="GO_Central"/>
</dbReference>
<dbReference type="GO" id="GO:0050832">
    <property type="term" value="P:defense response to fungus"/>
    <property type="evidence" value="ECO:0000314"/>
    <property type="project" value="UniProtKB"/>
</dbReference>
<dbReference type="GO" id="GO:0000423">
    <property type="term" value="P:mitophagy"/>
    <property type="evidence" value="ECO:0000318"/>
    <property type="project" value="GO_Central"/>
</dbReference>
<dbReference type="CDD" id="cd16128">
    <property type="entry name" value="Ubl_ATG8"/>
    <property type="match status" value="1"/>
</dbReference>
<dbReference type="FunFam" id="3.10.20.90:FF:000010">
    <property type="entry name" value="Autophagy-related protein"/>
    <property type="match status" value="1"/>
</dbReference>
<dbReference type="Gene3D" id="3.10.20.90">
    <property type="entry name" value="Phosphatidylinositol 3-kinase Catalytic Subunit, Chain A, domain 1"/>
    <property type="match status" value="1"/>
</dbReference>
<dbReference type="InterPro" id="IPR004241">
    <property type="entry name" value="Atg8-like"/>
</dbReference>
<dbReference type="InterPro" id="IPR029071">
    <property type="entry name" value="Ubiquitin-like_domsf"/>
</dbReference>
<dbReference type="PANTHER" id="PTHR10969">
    <property type="entry name" value="MICROTUBULE-ASSOCIATED PROTEINS 1A/1B LIGHT CHAIN 3-RELATED"/>
    <property type="match status" value="1"/>
</dbReference>
<dbReference type="Pfam" id="PF02991">
    <property type="entry name" value="ATG8"/>
    <property type="match status" value="1"/>
</dbReference>
<dbReference type="SUPFAM" id="SSF54236">
    <property type="entry name" value="Ubiquitin-like"/>
    <property type="match status" value="1"/>
</dbReference>
<sequence length="119" mass="13745">MAKSSFKLEHPLERRQAEAARIREKYPDRIPVIVEKAERSDIPDIDKKKYLVPADLTVGQFVYVVRKRIKLSAEKAIFIFVKNILPPTAAMMSAIYEEHKDEDGFLYMTYSGENTFGSF</sequence>
<name>ATG8C_SOLTU</name>
<protein>
    <recommendedName>
        <fullName evidence="8">Autophagy-related protein 8C-like</fullName>
    </recommendedName>
    <alternativeName>
        <fullName evidence="8">Autophagy-related ubiquitin-like modifier ATG8CL</fullName>
    </alternativeName>
</protein>
<comment type="function">
    <text evidence="4 6 9 10">Ubiquitin-like modifier involved in autophagosomes formation (Probable). May mediate the delivery of the autophagosomes to the vacuole via the microtubule cytoskeleton (Probable). ATG8CL-mediated selective autophagy contributes to defense against the fungal pathogen Phytophtora infestans (PubMed:26765567, PubMed:29932422).</text>
</comment>
<comment type="subunit">
    <text evidence="2 4 5 6">Interacts with ATG4 (By similarity). Interacts with the Phytophtora infestans effector PexRD54 (PubMed:26765567, PubMed:27458016). Interacts with JOKA2 (PubMed:26765567, PubMed:29932422).</text>
</comment>
<comment type="subcellular location">
    <subcellularLocation>
        <location evidence="4 6">Cytoplasmic vesicle</location>
        <location evidence="4 6">Autophagosome membrane</location>
        <topology evidence="1">Lipid-anchor</topology>
    </subcellularLocation>
    <subcellularLocation>
        <location evidence="6">Vacuole membrane</location>
        <topology evidence="1">Lipid-anchor</topology>
    </subcellularLocation>
    <subcellularLocation>
        <location evidence="3">Cytoplasm</location>
        <location evidence="3">Cytoskeleton</location>
    </subcellularLocation>
</comment>
<comment type="PTM">
    <text evidence="1 4 9">The C-terminal 2 residues are removed by ATG4 to expose Gly-117 at the C-terminus (By similarity). The C-terminal Gly is then amidated with phosphatidylethanolamine by an activating system similar to that for ubiquitin (Probable). The phosphatidylethanolamine amidated glycine is required for autophagosome formation (PubMed:26765567).</text>
</comment>
<comment type="similarity">
    <text evidence="8">Belongs to the ATG8 family.</text>
</comment>
<evidence type="ECO:0000250" key="1">
    <source>
        <dbReference type="UniProtKB" id="P38182"/>
    </source>
</evidence>
<evidence type="ECO:0000250" key="2">
    <source>
        <dbReference type="UniProtKB" id="Q2XPP5"/>
    </source>
</evidence>
<evidence type="ECO:0000250" key="3">
    <source>
        <dbReference type="UniProtKB" id="Q8LEM4"/>
    </source>
</evidence>
<evidence type="ECO:0000269" key="4">
    <source>
    </source>
</evidence>
<evidence type="ECO:0000269" key="5">
    <source>
    </source>
</evidence>
<evidence type="ECO:0000269" key="6">
    <source>
    </source>
</evidence>
<evidence type="ECO:0000303" key="7">
    <source>
    </source>
</evidence>
<evidence type="ECO:0000305" key="8"/>
<evidence type="ECO:0000305" key="9">
    <source>
    </source>
</evidence>
<evidence type="ECO:0000305" key="10">
    <source>
    </source>
</evidence>
<evidence type="ECO:0007829" key="11">
    <source>
        <dbReference type="PDB" id="5L83"/>
    </source>
</evidence>
<feature type="chain" id="PRO_0000447346" description="Autophagy-related protein 8C-like">
    <location>
        <begin position="1"/>
        <end position="119"/>
    </location>
</feature>
<feature type="propeptide" id="PRO_0000447363" description="Removed in mature form" evidence="2">
    <location>
        <begin position="118"/>
        <end position="119"/>
    </location>
</feature>
<feature type="site" description="Cleavage; by ATG4" evidence="2">
    <location>
        <begin position="117"/>
        <end position="118"/>
    </location>
</feature>
<feature type="lipid moiety-binding region" description="Phosphatidylethanolamine amidated glycine" evidence="9">
    <location>
        <position position="117"/>
    </location>
</feature>
<feature type="mutagenesis site" description="Loss of localization to autophagosome." evidence="4">
    <original>G</original>
    <variation>A</variation>
    <location>
        <position position="117"/>
    </location>
</feature>
<feature type="helix" evidence="11">
    <location>
        <begin position="5"/>
        <end position="9"/>
    </location>
</feature>
<feature type="helix" evidence="11">
    <location>
        <begin position="12"/>
        <end position="25"/>
    </location>
</feature>
<feature type="strand" evidence="11">
    <location>
        <begin position="29"/>
        <end position="36"/>
    </location>
</feature>
<feature type="strand" evidence="11">
    <location>
        <begin position="49"/>
        <end position="53"/>
    </location>
</feature>
<feature type="helix" evidence="11">
    <location>
        <begin position="58"/>
        <end position="69"/>
    </location>
</feature>
<feature type="strand" evidence="11">
    <location>
        <begin position="78"/>
        <end position="81"/>
    </location>
</feature>
<feature type="helix" evidence="11">
    <location>
        <begin position="92"/>
        <end position="99"/>
    </location>
</feature>
<feature type="strand" evidence="11">
    <location>
        <begin position="106"/>
        <end position="111"/>
    </location>
</feature>
<keyword id="KW-0002">3D-structure</keyword>
<keyword id="KW-0072">Autophagy</keyword>
<keyword id="KW-0963">Cytoplasm</keyword>
<keyword id="KW-0968">Cytoplasmic vesicle</keyword>
<keyword id="KW-0206">Cytoskeleton</keyword>
<keyword id="KW-0449">Lipoprotein</keyword>
<keyword id="KW-0472">Membrane</keyword>
<keyword id="KW-1185">Reference proteome</keyword>
<keyword id="KW-0833">Ubl conjugation pathway</keyword>
<keyword id="KW-0926">Vacuole</keyword>
<gene>
    <name evidence="7" type="primary">ATG8CL</name>
</gene>
<proteinExistence type="evidence at protein level"/>
<accession>M1C146</accession>
<reference key="1">
    <citation type="journal article" date="2011" name="Nature">
        <title>Genome sequence and analysis of the tuber crop potato.</title>
        <authorList>
            <consortium name="The Potato Genome Sequencing Consortium"/>
        </authorList>
    </citation>
    <scope>NUCLEOTIDE SEQUENCE [LARGE SCALE GENOMIC DNA]</scope>
    <source>
        <strain>cv. DM1-3 516 R44</strain>
    </source>
</reference>
<reference key="2">
    <citation type="journal article" date="2016" name="Elife">
        <title>An effector of the Irish potato famine pathogen antagonizes a host autophagy cargo receptor.</title>
        <authorList>
            <person name="Dagdas Y.F."/>
            <person name="Belhaj K."/>
            <person name="Maqbool A."/>
            <person name="Chaparro-Garcia A."/>
            <person name="Pandey P."/>
            <person name="Petre B."/>
            <person name="Tabassum N."/>
            <person name="Cruz-Mireles N."/>
            <person name="Hughes R.K."/>
            <person name="Sklenar J."/>
            <person name="Win J."/>
            <person name="Menke F."/>
            <person name="Findlay K."/>
            <person name="Banfield M.J."/>
            <person name="Kamoun S."/>
            <person name="Bozkurt T.O."/>
        </authorList>
    </citation>
    <scope>FUNCTION</scope>
    <scope>INTERACTION WITH JOKA2 AND PHYTOPHTORA INFESTANS EFFECTOR PEXRD54</scope>
    <scope>SUBCELLULAR LOCATION</scope>
    <scope>LIPIDATION AT GLY-117</scope>
    <scope>MUTAGENESIS OF GLY-117</scope>
</reference>
<reference key="3">
    <citation type="journal article" date="2018" name="Elife">
        <title>Host autophagy machinery is diverted to the pathogen interface to mediate focal defense responses against the Irish potato famine pathogen.</title>
        <authorList>
            <person name="Dagdas Y.F."/>
            <person name="Pandey P."/>
            <person name="Tumtas Y."/>
            <person name="Sanguankiattichai N."/>
            <person name="Belhaj K."/>
            <person name="Duggan C."/>
            <person name="Leary A.Y."/>
            <person name="Segretin M.E."/>
            <person name="Contreras M.P."/>
            <person name="Savage Z."/>
            <person name="Khandare V.S."/>
            <person name="Kamoun S."/>
            <person name="Bozkurt T.O."/>
        </authorList>
    </citation>
    <scope>FUNCTION</scope>
    <scope>INTERACTION WITH JOKA2</scope>
    <scope>SUBCELLULAR LOCATION</scope>
</reference>
<reference key="4">
    <citation type="journal article" date="2016" name="J. Biol. Chem.">
        <title>Structural basis of host autophagy-related protein 8 (ATG8) binding by the Irish potato famine pathogen effector protein PexRD54.</title>
        <authorList>
            <person name="Maqbool A."/>
            <person name="Hughes R.K."/>
            <person name="Dagdas Y.F."/>
            <person name="Tregidgo N."/>
            <person name="Zess E."/>
            <person name="Belhaj K."/>
            <person name="Round A."/>
            <person name="Bozkurt T.O."/>
            <person name="Kamoun S."/>
            <person name="Banfield M.J."/>
        </authorList>
    </citation>
    <scope>X-RAY CRYSTALLOGRAPHY (1.90 ANGSTROMS) OF 5-114 IN COMPLEX WITH A PEPTIDE FROM PHYTOPHTORA INFESTAHS PATHOGEN EFFECTOR PROTEIN PEXRD54</scope>
    <scope>INTERACTION WITH PHYTOPHTORA INFESTANS EFFECTOR PEXRD54</scope>
</reference>
<organism>
    <name type="scientific">Solanum tuberosum</name>
    <name type="common">Potato</name>
    <dbReference type="NCBI Taxonomy" id="4113"/>
    <lineage>
        <taxon>Eukaryota</taxon>
        <taxon>Viridiplantae</taxon>
        <taxon>Streptophyta</taxon>
        <taxon>Embryophyta</taxon>
        <taxon>Tracheophyta</taxon>
        <taxon>Spermatophyta</taxon>
        <taxon>Magnoliopsida</taxon>
        <taxon>eudicotyledons</taxon>
        <taxon>Gunneridae</taxon>
        <taxon>Pentapetalae</taxon>
        <taxon>asterids</taxon>
        <taxon>lamiids</taxon>
        <taxon>Solanales</taxon>
        <taxon>Solanaceae</taxon>
        <taxon>Solanoideae</taxon>
        <taxon>Solaneae</taxon>
        <taxon>Solanum</taxon>
    </lineage>
</organism>